<name>RS14Z_STAAC</name>
<dbReference type="EMBL" id="CP000046">
    <property type="protein sequence ID" value="AAW37101.1"/>
    <property type="molecule type" value="Genomic_DNA"/>
</dbReference>
<dbReference type="RefSeq" id="WP_001140799.1">
    <property type="nucleotide sequence ID" value="NZ_JBGOFO010000004.1"/>
</dbReference>
<dbReference type="SMR" id="Q5HDX1"/>
<dbReference type="KEGG" id="sac:SACOL2226"/>
<dbReference type="HOGENOM" id="CLU_139869_3_0_9"/>
<dbReference type="Proteomes" id="UP000000530">
    <property type="component" value="Chromosome"/>
</dbReference>
<dbReference type="GO" id="GO:0015935">
    <property type="term" value="C:small ribosomal subunit"/>
    <property type="evidence" value="ECO:0007669"/>
    <property type="project" value="TreeGrafter"/>
</dbReference>
<dbReference type="GO" id="GO:0019843">
    <property type="term" value="F:rRNA binding"/>
    <property type="evidence" value="ECO:0007669"/>
    <property type="project" value="UniProtKB-UniRule"/>
</dbReference>
<dbReference type="GO" id="GO:0003735">
    <property type="term" value="F:structural constituent of ribosome"/>
    <property type="evidence" value="ECO:0007669"/>
    <property type="project" value="InterPro"/>
</dbReference>
<dbReference type="GO" id="GO:0008270">
    <property type="term" value="F:zinc ion binding"/>
    <property type="evidence" value="ECO:0007669"/>
    <property type="project" value="UniProtKB-UniRule"/>
</dbReference>
<dbReference type="GO" id="GO:0006412">
    <property type="term" value="P:translation"/>
    <property type="evidence" value="ECO:0007669"/>
    <property type="project" value="UniProtKB-UniRule"/>
</dbReference>
<dbReference type="FunFam" id="4.10.830.10:FF:000001">
    <property type="entry name" value="30S ribosomal protein S14 type Z"/>
    <property type="match status" value="1"/>
</dbReference>
<dbReference type="Gene3D" id="4.10.830.10">
    <property type="entry name" value="30s Ribosomal Protein S14, Chain N"/>
    <property type="match status" value="1"/>
</dbReference>
<dbReference type="HAMAP" id="MF_01364_B">
    <property type="entry name" value="Ribosomal_uS14_2_B"/>
    <property type="match status" value="1"/>
</dbReference>
<dbReference type="InterPro" id="IPR001209">
    <property type="entry name" value="Ribosomal_uS14"/>
</dbReference>
<dbReference type="InterPro" id="IPR023053">
    <property type="entry name" value="Ribosomal_uS14_bact"/>
</dbReference>
<dbReference type="InterPro" id="IPR018271">
    <property type="entry name" value="Ribosomal_uS14_CS"/>
</dbReference>
<dbReference type="InterPro" id="IPR043140">
    <property type="entry name" value="Ribosomal_uS14_sf"/>
</dbReference>
<dbReference type="NCBIfam" id="NF005974">
    <property type="entry name" value="PRK08061.1"/>
    <property type="match status" value="1"/>
</dbReference>
<dbReference type="PANTHER" id="PTHR19836">
    <property type="entry name" value="30S RIBOSOMAL PROTEIN S14"/>
    <property type="match status" value="1"/>
</dbReference>
<dbReference type="PANTHER" id="PTHR19836:SF26">
    <property type="entry name" value="SMALL RIBOSOMAL SUBUNIT PROTEIN US14B"/>
    <property type="match status" value="1"/>
</dbReference>
<dbReference type="Pfam" id="PF00253">
    <property type="entry name" value="Ribosomal_S14"/>
    <property type="match status" value="1"/>
</dbReference>
<dbReference type="SUPFAM" id="SSF57716">
    <property type="entry name" value="Glucocorticoid receptor-like (DNA-binding domain)"/>
    <property type="match status" value="1"/>
</dbReference>
<dbReference type="PROSITE" id="PS00527">
    <property type="entry name" value="RIBOSOMAL_S14"/>
    <property type="match status" value="1"/>
</dbReference>
<evidence type="ECO:0000255" key="1">
    <source>
        <dbReference type="HAMAP-Rule" id="MF_01364"/>
    </source>
</evidence>
<evidence type="ECO:0000305" key="2"/>
<feature type="chain" id="PRO_0000130926" description="Small ribosomal subunit protein uS14B">
    <location>
        <begin position="1"/>
        <end position="61"/>
    </location>
</feature>
<feature type="binding site" evidence="1">
    <location>
        <position position="24"/>
    </location>
    <ligand>
        <name>Zn(2+)</name>
        <dbReference type="ChEBI" id="CHEBI:29105"/>
    </ligand>
</feature>
<feature type="binding site" evidence="1">
    <location>
        <position position="27"/>
    </location>
    <ligand>
        <name>Zn(2+)</name>
        <dbReference type="ChEBI" id="CHEBI:29105"/>
    </ligand>
</feature>
<feature type="binding site" evidence="1">
    <location>
        <position position="40"/>
    </location>
    <ligand>
        <name>Zn(2+)</name>
        <dbReference type="ChEBI" id="CHEBI:29105"/>
    </ligand>
</feature>
<feature type="binding site" evidence="1">
    <location>
        <position position="43"/>
    </location>
    <ligand>
        <name>Zn(2+)</name>
        <dbReference type="ChEBI" id="CHEBI:29105"/>
    </ligand>
</feature>
<gene>
    <name evidence="1" type="primary">rpsZ</name>
    <name evidence="1" type="synonym">rpsN1</name>
    <name type="ordered locus">SACOL2226</name>
</gene>
<protein>
    <recommendedName>
        <fullName evidence="1">Small ribosomal subunit protein uS14B</fullName>
    </recommendedName>
    <alternativeName>
        <fullName evidence="2">30S ribosomal protein S14 type Z</fullName>
    </alternativeName>
</protein>
<comment type="function">
    <text evidence="1">Binds 16S rRNA, required for the assembly of 30S particles and may also be responsible for determining the conformation of the 16S rRNA at the A site.</text>
</comment>
<comment type="cofactor">
    <cofactor evidence="1">
        <name>Zn(2+)</name>
        <dbReference type="ChEBI" id="CHEBI:29105"/>
    </cofactor>
    <text evidence="1">Binds 1 zinc ion per subunit.</text>
</comment>
<comment type="subunit">
    <text evidence="1">Part of the 30S ribosomal subunit. Contacts proteins S3 and S10.</text>
</comment>
<comment type="similarity">
    <text evidence="1">Belongs to the universal ribosomal protein uS14 family. Zinc-binding uS14 subfamily.</text>
</comment>
<keyword id="KW-0479">Metal-binding</keyword>
<keyword id="KW-0687">Ribonucleoprotein</keyword>
<keyword id="KW-0689">Ribosomal protein</keyword>
<keyword id="KW-0694">RNA-binding</keyword>
<keyword id="KW-0699">rRNA-binding</keyword>
<keyword id="KW-0862">Zinc</keyword>
<sequence>MAKTSMVAKQQKKQKYAVREYTRCERCGRPHSVYRKFKLCRICFRELAYKGQIPGVRKASW</sequence>
<organism>
    <name type="scientific">Staphylococcus aureus (strain COL)</name>
    <dbReference type="NCBI Taxonomy" id="93062"/>
    <lineage>
        <taxon>Bacteria</taxon>
        <taxon>Bacillati</taxon>
        <taxon>Bacillota</taxon>
        <taxon>Bacilli</taxon>
        <taxon>Bacillales</taxon>
        <taxon>Staphylococcaceae</taxon>
        <taxon>Staphylococcus</taxon>
    </lineage>
</organism>
<accession>Q5HDX1</accession>
<reference key="1">
    <citation type="journal article" date="2005" name="J. Bacteriol.">
        <title>Insights on evolution of virulence and resistance from the complete genome analysis of an early methicillin-resistant Staphylococcus aureus strain and a biofilm-producing methicillin-resistant Staphylococcus epidermidis strain.</title>
        <authorList>
            <person name="Gill S.R."/>
            <person name="Fouts D.E."/>
            <person name="Archer G.L."/>
            <person name="Mongodin E.F."/>
            <person name="DeBoy R.T."/>
            <person name="Ravel J."/>
            <person name="Paulsen I.T."/>
            <person name="Kolonay J.F."/>
            <person name="Brinkac L.M."/>
            <person name="Beanan M.J."/>
            <person name="Dodson R.J."/>
            <person name="Daugherty S.C."/>
            <person name="Madupu R."/>
            <person name="Angiuoli S.V."/>
            <person name="Durkin A.S."/>
            <person name="Haft D.H."/>
            <person name="Vamathevan J.J."/>
            <person name="Khouri H."/>
            <person name="Utterback T.R."/>
            <person name="Lee C."/>
            <person name="Dimitrov G."/>
            <person name="Jiang L."/>
            <person name="Qin H."/>
            <person name="Weidman J."/>
            <person name="Tran K."/>
            <person name="Kang K.H."/>
            <person name="Hance I.R."/>
            <person name="Nelson K.E."/>
            <person name="Fraser C.M."/>
        </authorList>
    </citation>
    <scope>NUCLEOTIDE SEQUENCE [LARGE SCALE GENOMIC DNA]</scope>
    <source>
        <strain>COL</strain>
    </source>
</reference>
<proteinExistence type="inferred from homology"/>